<feature type="chain" id="PRO_0000053126" description="Hemoglobin subunit beta">
    <location>
        <begin position="1"/>
        <end position="146"/>
    </location>
</feature>
<feature type="domain" description="Globin" evidence="3">
    <location>
        <begin position="2"/>
        <end position="146"/>
    </location>
</feature>
<feature type="binding site" description="distal binding residue">
    <location>
        <position position="63"/>
    </location>
    <ligand>
        <name>heme b</name>
        <dbReference type="ChEBI" id="CHEBI:60344"/>
    </ligand>
    <ligandPart>
        <name>Fe</name>
        <dbReference type="ChEBI" id="CHEBI:18248"/>
    </ligandPart>
</feature>
<feature type="binding site" description="proximal binding residue">
    <location>
        <position position="92"/>
    </location>
    <ligand>
        <name>heme b</name>
        <dbReference type="ChEBI" id="CHEBI:60344"/>
    </ligand>
    <ligandPart>
        <name>Fe</name>
        <dbReference type="ChEBI" id="CHEBI:18248"/>
    </ligandPart>
</feature>
<feature type="modified residue" description="N-acetylvaline" evidence="1">
    <location>
        <position position="1"/>
    </location>
</feature>
<feature type="modified residue" description="Phosphothreonine" evidence="2">
    <location>
        <position position="12"/>
    </location>
</feature>
<feature type="modified residue" description="Phosphoserine" evidence="2">
    <location>
        <position position="44"/>
    </location>
</feature>
<feature type="modified residue" description="N6-acetyllysine" evidence="2">
    <location>
        <position position="59"/>
    </location>
</feature>
<feature type="modified residue" description="N6-acetyllysine" evidence="2">
    <location>
        <position position="82"/>
    </location>
</feature>
<feature type="modified residue" description="S-nitrosocysteine" evidence="2">
    <location>
        <position position="93"/>
    </location>
</feature>
<feature type="modified residue" description="N6-acetyllysine" evidence="2">
    <location>
        <position position="144"/>
    </location>
</feature>
<protein>
    <recommendedName>
        <fullName>Hemoglobin subunit beta</fullName>
    </recommendedName>
    <alternativeName>
        <fullName>Beta-globin</fullName>
    </alternativeName>
    <alternativeName>
        <fullName>Hemoglobin beta chain</fullName>
    </alternativeName>
</protein>
<evidence type="ECO:0000250" key="1">
    <source>
        <dbReference type="UniProtKB" id="P02086"/>
    </source>
</evidence>
<evidence type="ECO:0000250" key="2">
    <source>
        <dbReference type="UniProtKB" id="P68871"/>
    </source>
</evidence>
<evidence type="ECO:0000255" key="3">
    <source>
        <dbReference type="PROSITE-ProRule" id="PRU00238"/>
    </source>
</evidence>
<organism>
    <name type="scientific">Cephalopachus bancanus</name>
    <name type="common">Western tarsier</name>
    <name type="synonym">Tarsius bancanus</name>
    <dbReference type="NCBI Taxonomy" id="9477"/>
    <lineage>
        <taxon>Eukaryota</taxon>
        <taxon>Metazoa</taxon>
        <taxon>Chordata</taxon>
        <taxon>Craniata</taxon>
        <taxon>Vertebrata</taxon>
        <taxon>Euteleostomi</taxon>
        <taxon>Mammalia</taxon>
        <taxon>Eutheria</taxon>
        <taxon>Euarchontoglires</taxon>
        <taxon>Primates</taxon>
        <taxon>Haplorrhini</taxon>
        <taxon>Tarsiiformes</taxon>
        <taxon>Tarsiidae</taxon>
        <taxon>Cephalopachus</taxon>
    </lineage>
</organism>
<keyword id="KW-0007">Acetylation</keyword>
<keyword id="KW-0903">Direct protein sequencing</keyword>
<keyword id="KW-0349">Heme</keyword>
<keyword id="KW-0408">Iron</keyword>
<keyword id="KW-0479">Metal-binding</keyword>
<keyword id="KW-0561">Oxygen transport</keyword>
<keyword id="KW-0597">Phosphoprotein</keyword>
<keyword id="KW-0702">S-nitrosylation</keyword>
<keyword id="KW-0813">Transport</keyword>
<sequence length="146" mass="15862">VHLTADEKAAVTALWGKVDVEDVGGEALGRLLVVYPWTQRFFDSFGDLSTPAAVMGNAKVKAHGKKVLNAFSEGMAHLDNLKGTFAKLSELHCDKLHVDPENFRLLGNVLVCVLAHHFGKEFTPQVQAAYQKVVAGVATALAHKYH</sequence>
<dbReference type="PIR" id="A02368">
    <property type="entry name" value="HBTB"/>
</dbReference>
<dbReference type="SMR" id="P02051"/>
<dbReference type="GO" id="GO:0072562">
    <property type="term" value="C:blood microparticle"/>
    <property type="evidence" value="ECO:0007669"/>
    <property type="project" value="TreeGrafter"/>
</dbReference>
<dbReference type="GO" id="GO:0031838">
    <property type="term" value="C:haptoglobin-hemoglobin complex"/>
    <property type="evidence" value="ECO:0007669"/>
    <property type="project" value="TreeGrafter"/>
</dbReference>
<dbReference type="GO" id="GO:0005833">
    <property type="term" value="C:hemoglobin complex"/>
    <property type="evidence" value="ECO:0007669"/>
    <property type="project" value="InterPro"/>
</dbReference>
<dbReference type="GO" id="GO:0031720">
    <property type="term" value="F:haptoglobin binding"/>
    <property type="evidence" value="ECO:0007669"/>
    <property type="project" value="TreeGrafter"/>
</dbReference>
<dbReference type="GO" id="GO:0020037">
    <property type="term" value="F:heme binding"/>
    <property type="evidence" value="ECO:0007669"/>
    <property type="project" value="InterPro"/>
</dbReference>
<dbReference type="GO" id="GO:0031721">
    <property type="term" value="F:hemoglobin alpha binding"/>
    <property type="evidence" value="ECO:0007669"/>
    <property type="project" value="TreeGrafter"/>
</dbReference>
<dbReference type="GO" id="GO:0046872">
    <property type="term" value="F:metal ion binding"/>
    <property type="evidence" value="ECO:0007669"/>
    <property type="project" value="UniProtKB-KW"/>
</dbReference>
<dbReference type="GO" id="GO:0043177">
    <property type="term" value="F:organic acid binding"/>
    <property type="evidence" value="ECO:0007669"/>
    <property type="project" value="TreeGrafter"/>
</dbReference>
<dbReference type="GO" id="GO:0019825">
    <property type="term" value="F:oxygen binding"/>
    <property type="evidence" value="ECO:0007669"/>
    <property type="project" value="InterPro"/>
</dbReference>
<dbReference type="GO" id="GO:0005344">
    <property type="term" value="F:oxygen carrier activity"/>
    <property type="evidence" value="ECO:0007669"/>
    <property type="project" value="UniProtKB-KW"/>
</dbReference>
<dbReference type="GO" id="GO:0004601">
    <property type="term" value="F:peroxidase activity"/>
    <property type="evidence" value="ECO:0007669"/>
    <property type="project" value="TreeGrafter"/>
</dbReference>
<dbReference type="GO" id="GO:0042744">
    <property type="term" value="P:hydrogen peroxide catabolic process"/>
    <property type="evidence" value="ECO:0007669"/>
    <property type="project" value="TreeGrafter"/>
</dbReference>
<dbReference type="CDD" id="cd08925">
    <property type="entry name" value="Hb-beta-like"/>
    <property type="match status" value="1"/>
</dbReference>
<dbReference type="FunFam" id="1.10.490.10:FF:000001">
    <property type="entry name" value="Hemoglobin subunit beta"/>
    <property type="match status" value="1"/>
</dbReference>
<dbReference type="Gene3D" id="1.10.490.10">
    <property type="entry name" value="Globins"/>
    <property type="match status" value="1"/>
</dbReference>
<dbReference type="InterPro" id="IPR000971">
    <property type="entry name" value="Globin"/>
</dbReference>
<dbReference type="InterPro" id="IPR009050">
    <property type="entry name" value="Globin-like_sf"/>
</dbReference>
<dbReference type="InterPro" id="IPR012292">
    <property type="entry name" value="Globin/Proto"/>
</dbReference>
<dbReference type="InterPro" id="IPR002337">
    <property type="entry name" value="Hemoglobin_b"/>
</dbReference>
<dbReference type="InterPro" id="IPR050056">
    <property type="entry name" value="Hemoglobin_oxygen_transport"/>
</dbReference>
<dbReference type="PANTHER" id="PTHR11442">
    <property type="entry name" value="HEMOGLOBIN FAMILY MEMBER"/>
    <property type="match status" value="1"/>
</dbReference>
<dbReference type="PANTHER" id="PTHR11442:SF42">
    <property type="entry name" value="HEMOGLOBIN SUBUNIT BETA"/>
    <property type="match status" value="1"/>
</dbReference>
<dbReference type="Pfam" id="PF00042">
    <property type="entry name" value="Globin"/>
    <property type="match status" value="1"/>
</dbReference>
<dbReference type="PRINTS" id="PR00814">
    <property type="entry name" value="BETAHAEM"/>
</dbReference>
<dbReference type="SUPFAM" id="SSF46458">
    <property type="entry name" value="Globin-like"/>
    <property type="match status" value="1"/>
</dbReference>
<dbReference type="PROSITE" id="PS01033">
    <property type="entry name" value="GLOBIN"/>
    <property type="match status" value="1"/>
</dbReference>
<accession>P02051</accession>
<gene>
    <name type="primary">HBB</name>
</gene>
<name>HBB_CEPBA</name>
<comment type="function">
    <text>Involved in oxygen transport from the lung to the various peripheral tissues.</text>
</comment>
<comment type="subunit">
    <text>Heterotetramer of two alpha chains and two beta chains.</text>
</comment>
<comment type="tissue specificity">
    <text>Red blood cells.</text>
</comment>
<comment type="similarity">
    <text evidence="3">Belongs to the globin family.</text>
</comment>
<reference key="1">
    <citation type="journal article" date="1976" name="Nature">
        <title>Alpha and beta chains of the major haemoglobin and a note on the minor component of Tarsius.</title>
        <authorList>
            <person name="Beard J.M."/>
            <person name="Barnicot N.A."/>
            <person name="Hewett-Emmett D."/>
        </authorList>
    </citation>
    <scope>PROTEIN SEQUENCE</scope>
</reference>
<proteinExistence type="evidence at protein level"/>